<reference key="1">
    <citation type="journal article" date="2000" name="Nature">
        <title>Complete genome sequence of Pseudomonas aeruginosa PAO1, an opportunistic pathogen.</title>
        <authorList>
            <person name="Stover C.K."/>
            <person name="Pham X.-Q.T."/>
            <person name="Erwin A.L."/>
            <person name="Mizoguchi S.D."/>
            <person name="Warrener P."/>
            <person name="Hickey M.J."/>
            <person name="Brinkman F.S.L."/>
            <person name="Hufnagle W.O."/>
            <person name="Kowalik D.J."/>
            <person name="Lagrou M."/>
            <person name="Garber R.L."/>
            <person name="Goltry L."/>
            <person name="Tolentino E."/>
            <person name="Westbrock-Wadman S."/>
            <person name="Yuan Y."/>
            <person name="Brody L.L."/>
            <person name="Coulter S.N."/>
            <person name="Folger K.R."/>
            <person name="Kas A."/>
            <person name="Larbig K."/>
            <person name="Lim R.M."/>
            <person name="Smith K.A."/>
            <person name="Spencer D.H."/>
            <person name="Wong G.K.-S."/>
            <person name="Wu Z."/>
            <person name="Paulsen I.T."/>
            <person name="Reizer J."/>
            <person name="Saier M.H. Jr."/>
            <person name="Hancock R.E.W."/>
            <person name="Lory S."/>
            <person name="Olson M.V."/>
        </authorList>
    </citation>
    <scope>NUCLEOTIDE SEQUENCE [LARGE SCALE GENOMIC DNA]</scope>
    <source>
        <strain>ATCC 15692 / DSM 22644 / CIP 104116 / JCM 14847 / LMG 12228 / 1C / PRS 101 / PAO1</strain>
    </source>
</reference>
<dbReference type="EC" id="6.3.4.4" evidence="1"/>
<dbReference type="EMBL" id="AE004091">
    <property type="protein sequence ID" value="AAG08323.1"/>
    <property type="molecule type" value="Genomic_DNA"/>
</dbReference>
<dbReference type="PIR" id="F83027">
    <property type="entry name" value="F83027"/>
</dbReference>
<dbReference type="RefSeq" id="NP_253625.1">
    <property type="nucleotide sequence ID" value="NC_002516.2"/>
</dbReference>
<dbReference type="RefSeq" id="WP_003095642.1">
    <property type="nucleotide sequence ID" value="NZ_QZGE01000002.1"/>
</dbReference>
<dbReference type="SMR" id="Q9HUM6"/>
<dbReference type="FunCoup" id="Q9HUM6">
    <property type="interactions" value="775"/>
</dbReference>
<dbReference type="STRING" id="208964.PA4938"/>
<dbReference type="PaxDb" id="208964-PA4938"/>
<dbReference type="GeneID" id="877657"/>
<dbReference type="KEGG" id="pae:PA4938"/>
<dbReference type="PATRIC" id="fig|208964.12.peg.5171"/>
<dbReference type="PseudoCAP" id="PA4938"/>
<dbReference type="HOGENOM" id="CLU_029848_0_0_6"/>
<dbReference type="InParanoid" id="Q9HUM6"/>
<dbReference type="OrthoDB" id="9807553at2"/>
<dbReference type="PhylomeDB" id="Q9HUM6"/>
<dbReference type="BioCyc" id="PAER208964:G1FZ6-5054-MONOMER"/>
<dbReference type="UniPathway" id="UPA00075">
    <property type="reaction ID" value="UER00335"/>
</dbReference>
<dbReference type="Proteomes" id="UP000002438">
    <property type="component" value="Chromosome"/>
</dbReference>
<dbReference type="GO" id="GO:0005737">
    <property type="term" value="C:cytoplasm"/>
    <property type="evidence" value="ECO:0000318"/>
    <property type="project" value="GO_Central"/>
</dbReference>
<dbReference type="GO" id="GO:0004019">
    <property type="term" value="F:adenylosuccinate synthase activity"/>
    <property type="evidence" value="ECO:0000318"/>
    <property type="project" value="GO_Central"/>
</dbReference>
<dbReference type="GO" id="GO:0005525">
    <property type="term" value="F:GTP binding"/>
    <property type="evidence" value="ECO:0007669"/>
    <property type="project" value="UniProtKB-UniRule"/>
</dbReference>
<dbReference type="GO" id="GO:0000287">
    <property type="term" value="F:magnesium ion binding"/>
    <property type="evidence" value="ECO:0007669"/>
    <property type="project" value="UniProtKB-UniRule"/>
</dbReference>
<dbReference type="GO" id="GO:0044208">
    <property type="term" value="P:'de novo' AMP biosynthetic process"/>
    <property type="evidence" value="ECO:0000318"/>
    <property type="project" value="GO_Central"/>
</dbReference>
<dbReference type="GO" id="GO:0046040">
    <property type="term" value="P:IMP metabolic process"/>
    <property type="evidence" value="ECO:0000318"/>
    <property type="project" value="GO_Central"/>
</dbReference>
<dbReference type="CDD" id="cd03108">
    <property type="entry name" value="AdSS"/>
    <property type="match status" value="1"/>
</dbReference>
<dbReference type="FunFam" id="1.10.300.10:FF:000001">
    <property type="entry name" value="Adenylosuccinate synthetase"/>
    <property type="match status" value="1"/>
</dbReference>
<dbReference type="FunFam" id="3.90.170.10:FF:000001">
    <property type="entry name" value="Adenylosuccinate synthetase"/>
    <property type="match status" value="1"/>
</dbReference>
<dbReference type="Gene3D" id="3.40.440.10">
    <property type="entry name" value="Adenylosuccinate Synthetase, subunit A, domain 1"/>
    <property type="match status" value="1"/>
</dbReference>
<dbReference type="Gene3D" id="1.10.300.10">
    <property type="entry name" value="Adenylosuccinate Synthetase, subunit A, domain 2"/>
    <property type="match status" value="1"/>
</dbReference>
<dbReference type="Gene3D" id="3.90.170.10">
    <property type="entry name" value="Adenylosuccinate Synthetase, subunit A, domain 3"/>
    <property type="match status" value="1"/>
</dbReference>
<dbReference type="HAMAP" id="MF_00011">
    <property type="entry name" value="Adenylosucc_synth"/>
    <property type="match status" value="1"/>
</dbReference>
<dbReference type="InterPro" id="IPR018220">
    <property type="entry name" value="Adenylosuccin_syn_GTP-bd"/>
</dbReference>
<dbReference type="InterPro" id="IPR033128">
    <property type="entry name" value="Adenylosuccin_syn_Lys_AS"/>
</dbReference>
<dbReference type="InterPro" id="IPR042109">
    <property type="entry name" value="Adenylosuccinate_synth_dom1"/>
</dbReference>
<dbReference type="InterPro" id="IPR042110">
    <property type="entry name" value="Adenylosuccinate_synth_dom2"/>
</dbReference>
<dbReference type="InterPro" id="IPR042111">
    <property type="entry name" value="Adenylosuccinate_synth_dom3"/>
</dbReference>
<dbReference type="InterPro" id="IPR001114">
    <property type="entry name" value="Adenylosuccinate_synthetase"/>
</dbReference>
<dbReference type="InterPro" id="IPR027417">
    <property type="entry name" value="P-loop_NTPase"/>
</dbReference>
<dbReference type="NCBIfam" id="NF002223">
    <property type="entry name" value="PRK01117.1"/>
    <property type="match status" value="1"/>
</dbReference>
<dbReference type="NCBIfam" id="TIGR00184">
    <property type="entry name" value="purA"/>
    <property type="match status" value="1"/>
</dbReference>
<dbReference type="PANTHER" id="PTHR11846">
    <property type="entry name" value="ADENYLOSUCCINATE SYNTHETASE"/>
    <property type="match status" value="1"/>
</dbReference>
<dbReference type="PANTHER" id="PTHR11846:SF0">
    <property type="entry name" value="ADENYLOSUCCINATE SYNTHETASE"/>
    <property type="match status" value="1"/>
</dbReference>
<dbReference type="Pfam" id="PF00709">
    <property type="entry name" value="Adenylsucc_synt"/>
    <property type="match status" value="1"/>
</dbReference>
<dbReference type="SMART" id="SM00788">
    <property type="entry name" value="Adenylsucc_synt"/>
    <property type="match status" value="1"/>
</dbReference>
<dbReference type="SUPFAM" id="SSF52540">
    <property type="entry name" value="P-loop containing nucleoside triphosphate hydrolases"/>
    <property type="match status" value="1"/>
</dbReference>
<dbReference type="PROSITE" id="PS01266">
    <property type="entry name" value="ADENYLOSUCCIN_SYN_1"/>
    <property type="match status" value="1"/>
</dbReference>
<dbReference type="PROSITE" id="PS00513">
    <property type="entry name" value="ADENYLOSUCCIN_SYN_2"/>
    <property type="match status" value="1"/>
</dbReference>
<proteinExistence type="inferred from homology"/>
<comment type="function">
    <text evidence="1">Plays an important role in the de novo pathway of purine nucleotide biosynthesis. Catalyzes the first committed step in the biosynthesis of AMP from IMP.</text>
</comment>
<comment type="catalytic activity">
    <reaction evidence="1">
        <text>IMP + L-aspartate + GTP = N(6)-(1,2-dicarboxyethyl)-AMP + GDP + phosphate + 2 H(+)</text>
        <dbReference type="Rhea" id="RHEA:15753"/>
        <dbReference type="ChEBI" id="CHEBI:15378"/>
        <dbReference type="ChEBI" id="CHEBI:29991"/>
        <dbReference type="ChEBI" id="CHEBI:37565"/>
        <dbReference type="ChEBI" id="CHEBI:43474"/>
        <dbReference type="ChEBI" id="CHEBI:57567"/>
        <dbReference type="ChEBI" id="CHEBI:58053"/>
        <dbReference type="ChEBI" id="CHEBI:58189"/>
        <dbReference type="EC" id="6.3.4.4"/>
    </reaction>
</comment>
<comment type="cofactor">
    <cofactor evidence="1">
        <name>Mg(2+)</name>
        <dbReference type="ChEBI" id="CHEBI:18420"/>
    </cofactor>
    <text evidence="1">Binds 1 Mg(2+) ion per subunit.</text>
</comment>
<comment type="pathway">
    <text evidence="1">Purine metabolism; AMP biosynthesis via de novo pathway; AMP from IMP: step 1/2.</text>
</comment>
<comment type="subunit">
    <text evidence="1">Homodimer.</text>
</comment>
<comment type="subcellular location">
    <subcellularLocation>
        <location evidence="1">Cytoplasm</location>
    </subcellularLocation>
</comment>
<comment type="similarity">
    <text evidence="1">Belongs to the adenylosuccinate synthetase family.</text>
</comment>
<gene>
    <name evidence="1" type="primary">purA</name>
    <name type="ordered locus">PA4938</name>
</gene>
<protein>
    <recommendedName>
        <fullName evidence="1">Adenylosuccinate synthetase</fullName>
        <shortName evidence="1">AMPSase</shortName>
        <shortName evidence="1">AdSS</shortName>
        <ecNumber evidence="1">6.3.4.4</ecNumber>
    </recommendedName>
    <alternativeName>
        <fullName evidence="1">IMP--aspartate ligase</fullName>
    </alternativeName>
</protein>
<evidence type="ECO:0000255" key="1">
    <source>
        <dbReference type="HAMAP-Rule" id="MF_00011"/>
    </source>
</evidence>
<name>PURA_PSEAE</name>
<organism>
    <name type="scientific">Pseudomonas aeruginosa (strain ATCC 15692 / DSM 22644 / CIP 104116 / JCM 14847 / LMG 12228 / 1C / PRS 101 / PAO1)</name>
    <dbReference type="NCBI Taxonomy" id="208964"/>
    <lineage>
        <taxon>Bacteria</taxon>
        <taxon>Pseudomonadati</taxon>
        <taxon>Pseudomonadota</taxon>
        <taxon>Gammaproteobacteria</taxon>
        <taxon>Pseudomonadales</taxon>
        <taxon>Pseudomonadaceae</taxon>
        <taxon>Pseudomonas</taxon>
    </lineage>
</organism>
<keyword id="KW-0963">Cytoplasm</keyword>
<keyword id="KW-0342">GTP-binding</keyword>
<keyword id="KW-0436">Ligase</keyword>
<keyword id="KW-0460">Magnesium</keyword>
<keyword id="KW-0479">Metal-binding</keyword>
<keyword id="KW-0547">Nucleotide-binding</keyword>
<keyword id="KW-0658">Purine biosynthesis</keyword>
<keyword id="KW-1185">Reference proteome</keyword>
<feature type="chain" id="PRO_0000095213" description="Adenylosuccinate synthetase">
    <location>
        <begin position="1"/>
        <end position="430"/>
    </location>
</feature>
<feature type="active site" description="Proton acceptor" evidence="1">
    <location>
        <position position="14"/>
    </location>
</feature>
<feature type="active site" description="Proton donor" evidence="1">
    <location>
        <position position="42"/>
    </location>
</feature>
<feature type="binding site" evidence="1">
    <location>
        <begin position="13"/>
        <end position="19"/>
    </location>
    <ligand>
        <name>GTP</name>
        <dbReference type="ChEBI" id="CHEBI:37565"/>
    </ligand>
</feature>
<feature type="binding site" description="in other chain" evidence="1">
    <location>
        <begin position="14"/>
        <end position="17"/>
    </location>
    <ligand>
        <name>IMP</name>
        <dbReference type="ChEBI" id="CHEBI:58053"/>
        <note>ligand shared between dimeric partners</note>
    </ligand>
</feature>
<feature type="binding site" evidence="1">
    <location>
        <position position="14"/>
    </location>
    <ligand>
        <name>Mg(2+)</name>
        <dbReference type="ChEBI" id="CHEBI:18420"/>
    </ligand>
</feature>
<feature type="binding site" description="in other chain" evidence="1">
    <location>
        <begin position="39"/>
        <end position="42"/>
    </location>
    <ligand>
        <name>IMP</name>
        <dbReference type="ChEBI" id="CHEBI:58053"/>
        <note>ligand shared between dimeric partners</note>
    </ligand>
</feature>
<feature type="binding site" evidence="1">
    <location>
        <begin position="41"/>
        <end position="43"/>
    </location>
    <ligand>
        <name>GTP</name>
        <dbReference type="ChEBI" id="CHEBI:37565"/>
    </ligand>
</feature>
<feature type="binding site" evidence="1">
    <location>
        <position position="41"/>
    </location>
    <ligand>
        <name>Mg(2+)</name>
        <dbReference type="ChEBI" id="CHEBI:18420"/>
    </ligand>
</feature>
<feature type="binding site" description="in other chain" evidence="1">
    <location>
        <position position="130"/>
    </location>
    <ligand>
        <name>IMP</name>
        <dbReference type="ChEBI" id="CHEBI:58053"/>
        <note>ligand shared between dimeric partners</note>
    </ligand>
</feature>
<feature type="binding site" evidence="1">
    <location>
        <position position="144"/>
    </location>
    <ligand>
        <name>IMP</name>
        <dbReference type="ChEBI" id="CHEBI:58053"/>
        <note>ligand shared between dimeric partners</note>
    </ligand>
</feature>
<feature type="binding site" description="in other chain" evidence="1">
    <location>
        <position position="225"/>
    </location>
    <ligand>
        <name>IMP</name>
        <dbReference type="ChEBI" id="CHEBI:58053"/>
        <note>ligand shared between dimeric partners</note>
    </ligand>
</feature>
<feature type="binding site" description="in other chain" evidence="1">
    <location>
        <position position="240"/>
    </location>
    <ligand>
        <name>IMP</name>
        <dbReference type="ChEBI" id="CHEBI:58053"/>
        <note>ligand shared between dimeric partners</note>
    </ligand>
</feature>
<feature type="binding site" evidence="1">
    <location>
        <begin position="300"/>
        <end position="306"/>
    </location>
    <ligand>
        <name>substrate</name>
    </ligand>
</feature>
<feature type="binding site" description="in other chain" evidence="1">
    <location>
        <position position="304"/>
    </location>
    <ligand>
        <name>IMP</name>
        <dbReference type="ChEBI" id="CHEBI:58053"/>
        <note>ligand shared between dimeric partners</note>
    </ligand>
</feature>
<feature type="binding site" evidence="1">
    <location>
        <position position="306"/>
    </location>
    <ligand>
        <name>GTP</name>
        <dbReference type="ChEBI" id="CHEBI:37565"/>
    </ligand>
</feature>
<feature type="binding site" evidence="1">
    <location>
        <begin position="332"/>
        <end position="334"/>
    </location>
    <ligand>
        <name>GTP</name>
        <dbReference type="ChEBI" id="CHEBI:37565"/>
    </ligand>
</feature>
<feature type="binding site" evidence="1">
    <location>
        <begin position="414"/>
        <end position="416"/>
    </location>
    <ligand>
        <name>GTP</name>
        <dbReference type="ChEBI" id="CHEBI:37565"/>
    </ligand>
</feature>
<sequence length="430" mass="46814">MGKNVVVLGTQWGDEGKGKIVDLLTEQAAAVVRYQGGHNAGHTLVIDGEKTVLHLIPSGILREGVQCLIGNGVVLAPDALLREITKLEEKGVPVRERLRISPSCPLILSYHVALDQAREKARGEAKIGTTGRGIGPAYEDKVARRGLRVGDLFHRERFAAKLGELLDYHNFVLQHYYKEPAIDFQKTLDEAMEYAELLKPMMADVAATLHDLRKHGKDIMFEGAQGSLLDIDHGTYPYVTSSNTTAGGTATGSGFGPLYLDYVLGITKAYTTRVGSGPFPTELFDDVGAYLAKRGHEFGATTGRARRCGWFDAVILRRAIEINSISGLCLTKLDVLDGLDVVRLCVGYKNADGDVLEAPTDADSYIGLQPVYEEMPGWSESTVGAKTLEELPANARAYIKRVEELVGAPIDIISTGPDRNETIILRHPFA</sequence>
<accession>Q9HUM6</accession>